<accession>A6U882</accession>
<dbReference type="EMBL" id="CP000738">
    <property type="protein sequence ID" value="ABR59862.1"/>
    <property type="molecule type" value="Genomic_DNA"/>
</dbReference>
<dbReference type="RefSeq" id="WP_003536496.1">
    <property type="nucleotide sequence ID" value="NC_009636.1"/>
</dbReference>
<dbReference type="RefSeq" id="YP_001326697.1">
    <property type="nucleotide sequence ID" value="NC_009636.1"/>
</dbReference>
<dbReference type="SMR" id="A6U882"/>
<dbReference type="STRING" id="366394.Smed_1009"/>
<dbReference type="GeneID" id="89575703"/>
<dbReference type="KEGG" id="smd:Smed_1009"/>
<dbReference type="PATRIC" id="fig|366394.8.peg.4130"/>
<dbReference type="eggNOG" id="COG0100">
    <property type="taxonomic scope" value="Bacteria"/>
</dbReference>
<dbReference type="HOGENOM" id="CLU_072439_5_0_5"/>
<dbReference type="OrthoDB" id="9806415at2"/>
<dbReference type="PRO" id="PR:A6U882"/>
<dbReference type="Proteomes" id="UP000001108">
    <property type="component" value="Chromosome"/>
</dbReference>
<dbReference type="GO" id="GO:1990904">
    <property type="term" value="C:ribonucleoprotein complex"/>
    <property type="evidence" value="ECO:0007669"/>
    <property type="project" value="UniProtKB-KW"/>
</dbReference>
<dbReference type="GO" id="GO:0005840">
    <property type="term" value="C:ribosome"/>
    <property type="evidence" value="ECO:0007669"/>
    <property type="project" value="UniProtKB-KW"/>
</dbReference>
<dbReference type="GO" id="GO:0019843">
    <property type="term" value="F:rRNA binding"/>
    <property type="evidence" value="ECO:0007669"/>
    <property type="project" value="UniProtKB-UniRule"/>
</dbReference>
<dbReference type="GO" id="GO:0003735">
    <property type="term" value="F:structural constituent of ribosome"/>
    <property type="evidence" value="ECO:0007669"/>
    <property type="project" value="InterPro"/>
</dbReference>
<dbReference type="GO" id="GO:0006412">
    <property type="term" value="P:translation"/>
    <property type="evidence" value="ECO:0007669"/>
    <property type="project" value="UniProtKB-UniRule"/>
</dbReference>
<dbReference type="FunFam" id="3.30.420.80:FF:000001">
    <property type="entry name" value="30S ribosomal protein S11"/>
    <property type="match status" value="1"/>
</dbReference>
<dbReference type="Gene3D" id="3.30.420.80">
    <property type="entry name" value="Ribosomal protein S11"/>
    <property type="match status" value="1"/>
</dbReference>
<dbReference type="HAMAP" id="MF_01310">
    <property type="entry name" value="Ribosomal_uS11"/>
    <property type="match status" value="1"/>
</dbReference>
<dbReference type="InterPro" id="IPR001971">
    <property type="entry name" value="Ribosomal_uS11"/>
</dbReference>
<dbReference type="InterPro" id="IPR019981">
    <property type="entry name" value="Ribosomal_uS11_bac-type"/>
</dbReference>
<dbReference type="InterPro" id="IPR018102">
    <property type="entry name" value="Ribosomal_uS11_CS"/>
</dbReference>
<dbReference type="InterPro" id="IPR036967">
    <property type="entry name" value="Ribosomal_uS11_sf"/>
</dbReference>
<dbReference type="NCBIfam" id="NF003698">
    <property type="entry name" value="PRK05309.1"/>
    <property type="match status" value="1"/>
</dbReference>
<dbReference type="NCBIfam" id="TIGR03632">
    <property type="entry name" value="uS11_bact"/>
    <property type="match status" value="1"/>
</dbReference>
<dbReference type="PANTHER" id="PTHR11759">
    <property type="entry name" value="40S RIBOSOMAL PROTEIN S14/30S RIBOSOMAL PROTEIN S11"/>
    <property type="match status" value="1"/>
</dbReference>
<dbReference type="Pfam" id="PF00411">
    <property type="entry name" value="Ribosomal_S11"/>
    <property type="match status" value="1"/>
</dbReference>
<dbReference type="PIRSF" id="PIRSF002131">
    <property type="entry name" value="Ribosomal_S11"/>
    <property type="match status" value="1"/>
</dbReference>
<dbReference type="SUPFAM" id="SSF53137">
    <property type="entry name" value="Translational machinery components"/>
    <property type="match status" value="1"/>
</dbReference>
<dbReference type="PROSITE" id="PS00054">
    <property type="entry name" value="RIBOSOMAL_S11"/>
    <property type="match status" value="1"/>
</dbReference>
<evidence type="ECO:0000255" key="1">
    <source>
        <dbReference type="HAMAP-Rule" id="MF_01310"/>
    </source>
</evidence>
<evidence type="ECO:0000305" key="2"/>
<organism>
    <name type="scientific">Sinorhizobium medicae (strain WSM419)</name>
    <name type="common">Ensifer medicae</name>
    <dbReference type="NCBI Taxonomy" id="366394"/>
    <lineage>
        <taxon>Bacteria</taxon>
        <taxon>Pseudomonadati</taxon>
        <taxon>Pseudomonadota</taxon>
        <taxon>Alphaproteobacteria</taxon>
        <taxon>Hyphomicrobiales</taxon>
        <taxon>Rhizobiaceae</taxon>
        <taxon>Sinorhizobium/Ensifer group</taxon>
        <taxon>Sinorhizobium</taxon>
    </lineage>
</organism>
<gene>
    <name evidence="1" type="primary">rpsK</name>
    <name type="ordered locus">Smed_1009</name>
</gene>
<comment type="function">
    <text evidence="1">Located on the platform of the 30S subunit, it bridges several disparate RNA helices of the 16S rRNA. Forms part of the Shine-Dalgarno cleft in the 70S ribosome.</text>
</comment>
<comment type="subunit">
    <text evidence="1">Part of the 30S ribosomal subunit. Interacts with proteins S7 and S18. Binds to IF-3.</text>
</comment>
<comment type="similarity">
    <text evidence="1">Belongs to the universal ribosomal protein uS11 family.</text>
</comment>
<proteinExistence type="inferred from homology"/>
<keyword id="KW-0687">Ribonucleoprotein</keyword>
<keyword id="KW-0689">Ribosomal protein</keyword>
<keyword id="KW-0694">RNA-binding</keyword>
<keyword id="KW-0699">rRNA-binding</keyword>
<name>RS11_SINMW</name>
<protein>
    <recommendedName>
        <fullName evidence="1">Small ribosomal subunit protein uS11</fullName>
    </recommendedName>
    <alternativeName>
        <fullName evidence="2">30S ribosomal protein S11</fullName>
    </alternativeName>
</protein>
<feature type="chain" id="PRO_1000051856" description="Small ribosomal subunit protein uS11">
    <location>
        <begin position="1"/>
        <end position="129"/>
    </location>
</feature>
<reference key="1">
    <citation type="submission" date="2007-06" db="EMBL/GenBank/DDBJ databases">
        <title>Complete sequence of Sinorhizobium medicae WSM419 chromosome.</title>
        <authorList>
            <consortium name="US DOE Joint Genome Institute"/>
            <person name="Copeland A."/>
            <person name="Lucas S."/>
            <person name="Lapidus A."/>
            <person name="Barry K."/>
            <person name="Glavina del Rio T."/>
            <person name="Dalin E."/>
            <person name="Tice H."/>
            <person name="Pitluck S."/>
            <person name="Chain P."/>
            <person name="Malfatti S."/>
            <person name="Shin M."/>
            <person name="Vergez L."/>
            <person name="Schmutz J."/>
            <person name="Larimer F."/>
            <person name="Land M."/>
            <person name="Hauser L."/>
            <person name="Kyrpides N."/>
            <person name="Mikhailova N."/>
            <person name="Reeve W.G."/>
            <person name="Richardson P."/>
        </authorList>
    </citation>
    <scope>NUCLEOTIDE SEQUENCE [LARGE SCALE GENOMIC DNA]</scope>
    <source>
        <strain>WSM419</strain>
    </source>
</reference>
<sequence>MAKEATRVRRRERKNITSGVAHVNSSFNNTMITITDAQGNAIAWSSAGAKGFKGSRKSTPFAAQIAAEDCAKKAQEHGMKSLEVEVCGPGSGRESALRALQAAGFMITSIRDVTPIPHNGCRPRKKRRV</sequence>